<reference key="1">
    <citation type="submission" date="2008-02" db="EMBL/GenBank/DDBJ databases">
        <title>Complete sequence of chromosome 1 of Burkholderia cenocepacia MC0-3.</title>
        <authorList>
            <person name="Copeland A."/>
            <person name="Lucas S."/>
            <person name="Lapidus A."/>
            <person name="Barry K."/>
            <person name="Bruce D."/>
            <person name="Goodwin L."/>
            <person name="Glavina del Rio T."/>
            <person name="Dalin E."/>
            <person name="Tice H."/>
            <person name="Pitluck S."/>
            <person name="Chain P."/>
            <person name="Malfatti S."/>
            <person name="Shin M."/>
            <person name="Vergez L."/>
            <person name="Schmutz J."/>
            <person name="Larimer F."/>
            <person name="Land M."/>
            <person name="Hauser L."/>
            <person name="Kyrpides N."/>
            <person name="Mikhailova N."/>
            <person name="Tiedje J."/>
            <person name="Richardson P."/>
        </authorList>
    </citation>
    <scope>NUCLEOTIDE SEQUENCE [LARGE SCALE GENOMIC DNA]</scope>
    <source>
        <strain>MC0-3</strain>
    </source>
</reference>
<protein>
    <recommendedName>
        <fullName evidence="1">Histidine ammonia-lyase</fullName>
        <shortName evidence="1">Histidase</shortName>
        <ecNumber evidence="1">4.3.1.3</ecNumber>
    </recommendedName>
</protein>
<accession>B1JV50</accession>
<name>HUTH_BURO0</name>
<proteinExistence type="inferred from homology"/>
<feature type="chain" id="PRO_1000100436" description="Histidine ammonia-lyase">
    <location>
        <begin position="1"/>
        <end position="507"/>
    </location>
</feature>
<feature type="modified residue" description="2,3-didehydroalanine (Ser)" evidence="1">
    <location>
        <position position="142"/>
    </location>
</feature>
<feature type="cross-link" description="5-imidazolinone (Ala-Gly)" evidence="1">
    <location>
        <begin position="141"/>
        <end position="143"/>
    </location>
</feature>
<evidence type="ECO:0000255" key="1">
    <source>
        <dbReference type="HAMAP-Rule" id="MF_00229"/>
    </source>
</evidence>
<keyword id="KW-0963">Cytoplasm</keyword>
<keyword id="KW-0369">Histidine metabolism</keyword>
<keyword id="KW-0456">Lyase</keyword>
<gene>
    <name evidence="1" type="primary">hutH</name>
    <name type="ordered locus">Bcenmc03_2189</name>
</gene>
<organism>
    <name type="scientific">Burkholderia orbicola (strain MC0-3)</name>
    <dbReference type="NCBI Taxonomy" id="406425"/>
    <lineage>
        <taxon>Bacteria</taxon>
        <taxon>Pseudomonadati</taxon>
        <taxon>Pseudomonadota</taxon>
        <taxon>Betaproteobacteria</taxon>
        <taxon>Burkholderiales</taxon>
        <taxon>Burkholderiaceae</taxon>
        <taxon>Burkholderia</taxon>
        <taxon>Burkholderia cepacia complex</taxon>
        <taxon>Burkholderia orbicola</taxon>
    </lineage>
</organism>
<comment type="catalytic activity">
    <reaction evidence="1">
        <text>L-histidine = trans-urocanate + NH4(+)</text>
        <dbReference type="Rhea" id="RHEA:21232"/>
        <dbReference type="ChEBI" id="CHEBI:17771"/>
        <dbReference type="ChEBI" id="CHEBI:28938"/>
        <dbReference type="ChEBI" id="CHEBI:57595"/>
        <dbReference type="EC" id="4.3.1.3"/>
    </reaction>
</comment>
<comment type="pathway">
    <text evidence="1">Amino-acid degradation; L-histidine degradation into L-glutamate; N-formimidoyl-L-glutamate from L-histidine: step 1/3.</text>
</comment>
<comment type="subcellular location">
    <subcellularLocation>
        <location evidence="1">Cytoplasm</location>
    </subcellularLocation>
</comment>
<comment type="PTM">
    <text evidence="1">Contains an active site 4-methylidene-imidazol-5-one (MIO), which is formed autocatalytically by cyclization and dehydration of residues Ala-Ser-Gly.</text>
</comment>
<comment type="similarity">
    <text evidence="1">Belongs to the PAL/histidase family.</text>
</comment>
<dbReference type="EC" id="4.3.1.3" evidence="1"/>
<dbReference type="EMBL" id="CP000958">
    <property type="protein sequence ID" value="ACA91350.1"/>
    <property type="molecule type" value="Genomic_DNA"/>
</dbReference>
<dbReference type="RefSeq" id="WP_006478341.1">
    <property type="nucleotide sequence ID" value="NC_010508.1"/>
</dbReference>
<dbReference type="SMR" id="B1JV50"/>
<dbReference type="GeneID" id="83048975"/>
<dbReference type="KEGG" id="bcm:Bcenmc03_2189"/>
<dbReference type="HOGENOM" id="CLU_014801_4_0_4"/>
<dbReference type="UniPathway" id="UPA00379">
    <property type="reaction ID" value="UER00549"/>
</dbReference>
<dbReference type="Proteomes" id="UP000002169">
    <property type="component" value="Chromosome 1"/>
</dbReference>
<dbReference type="GO" id="GO:0005737">
    <property type="term" value="C:cytoplasm"/>
    <property type="evidence" value="ECO:0007669"/>
    <property type="project" value="UniProtKB-SubCell"/>
</dbReference>
<dbReference type="GO" id="GO:0004397">
    <property type="term" value="F:histidine ammonia-lyase activity"/>
    <property type="evidence" value="ECO:0007669"/>
    <property type="project" value="UniProtKB-UniRule"/>
</dbReference>
<dbReference type="GO" id="GO:0019556">
    <property type="term" value="P:L-histidine catabolic process to glutamate and formamide"/>
    <property type="evidence" value="ECO:0007669"/>
    <property type="project" value="UniProtKB-UniPathway"/>
</dbReference>
<dbReference type="GO" id="GO:0019557">
    <property type="term" value="P:L-histidine catabolic process to glutamate and formate"/>
    <property type="evidence" value="ECO:0007669"/>
    <property type="project" value="UniProtKB-UniPathway"/>
</dbReference>
<dbReference type="CDD" id="cd00332">
    <property type="entry name" value="PAL-HAL"/>
    <property type="match status" value="1"/>
</dbReference>
<dbReference type="FunFam" id="1.10.275.10:FF:000005">
    <property type="entry name" value="Histidine ammonia-lyase"/>
    <property type="match status" value="1"/>
</dbReference>
<dbReference type="FunFam" id="1.20.200.10:FF:000003">
    <property type="entry name" value="Histidine ammonia-lyase"/>
    <property type="match status" value="1"/>
</dbReference>
<dbReference type="Gene3D" id="1.20.200.10">
    <property type="entry name" value="Fumarase/aspartase (Central domain)"/>
    <property type="match status" value="1"/>
</dbReference>
<dbReference type="Gene3D" id="1.10.275.10">
    <property type="entry name" value="Fumarase/aspartase (N-terminal domain)"/>
    <property type="match status" value="1"/>
</dbReference>
<dbReference type="HAMAP" id="MF_00229">
    <property type="entry name" value="His_ammonia_lyase"/>
    <property type="match status" value="1"/>
</dbReference>
<dbReference type="InterPro" id="IPR001106">
    <property type="entry name" value="Aromatic_Lyase"/>
</dbReference>
<dbReference type="InterPro" id="IPR024083">
    <property type="entry name" value="Fumarase/histidase_N"/>
</dbReference>
<dbReference type="InterPro" id="IPR005921">
    <property type="entry name" value="HutH"/>
</dbReference>
<dbReference type="InterPro" id="IPR008948">
    <property type="entry name" value="L-Aspartase-like"/>
</dbReference>
<dbReference type="InterPro" id="IPR022313">
    <property type="entry name" value="Phe/His_NH3-lyase_AS"/>
</dbReference>
<dbReference type="NCBIfam" id="TIGR01225">
    <property type="entry name" value="hutH"/>
    <property type="match status" value="1"/>
</dbReference>
<dbReference type="NCBIfam" id="NF006871">
    <property type="entry name" value="PRK09367.1"/>
    <property type="match status" value="1"/>
</dbReference>
<dbReference type="PANTHER" id="PTHR10362">
    <property type="entry name" value="HISTIDINE AMMONIA-LYASE"/>
    <property type="match status" value="1"/>
</dbReference>
<dbReference type="Pfam" id="PF00221">
    <property type="entry name" value="Lyase_aromatic"/>
    <property type="match status" value="1"/>
</dbReference>
<dbReference type="SUPFAM" id="SSF48557">
    <property type="entry name" value="L-aspartase-like"/>
    <property type="match status" value="1"/>
</dbReference>
<dbReference type="PROSITE" id="PS00488">
    <property type="entry name" value="PAL_HISTIDASE"/>
    <property type="match status" value="1"/>
</dbReference>
<sequence length="507" mass="53295">MITLTPGHLTLPQLRRIAREPVQLKLDPASFAKIDAGAKAVADIAAKGEPAYGINTGFGRLASTHIPHDQLELLQKNLVLSHAVGVGEPMARSSVRLLMALKLSSLGRGHSGIRREVMDALITLFNADVLPLIPVKGSVGASGDLAPLAHMSAVLLGVGEVFIRGERASALDGLRVAGLAPLTLQAKEGLALLNGTQASTALALDNMFAIEDLYRTALVAGALSVDAAAGSVKPFDARIHELRGHQGQIDAAASYRELLEGSPINQSHRDCDKVQDPYSLRCQPQVMGACLDQMRHAADVLLVEANAVSDNPLIFPDTGEVLSGGNFHAEPVAFAADNLALAAAEIGALAERRIALLIDATLSGLPPFLVKDGGVNSGFMIAHVTAAALASENKTLAHPASVDSLPTSANQEDHVSMATFAARKLADIADNTKHILAIELLAAAQGVDLRAPYHTSPKLAPVMETIRGKVAHYELDHYFAPDIAVIAKLVGERAFAKVAPFSFASEQ</sequence>